<protein>
    <recommendedName>
        <fullName evidence="1">Biosynthetic peptidoglycan transglycosylase</fullName>
        <ecNumber evidence="1">2.4.99.28</ecNumber>
    </recommendedName>
    <alternativeName>
        <fullName evidence="1">Glycan polymerase</fullName>
    </alternativeName>
    <alternativeName>
        <fullName evidence="1">Peptidoglycan glycosyltransferase MtgA</fullName>
        <shortName evidence="1">PGT</shortName>
    </alternativeName>
</protein>
<organism>
    <name type="scientific">Salmonella gallinarum (strain 287/91 / NCTC 13346)</name>
    <dbReference type="NCBI Taxonomy" id="550538"/>
    <lineage>
        <taxon>Bacteria</taxon>
        <taxon>Pseudomonadati</taxon>
        <taxon>Pseudomonadota</taxon>
        <taxon>Gammaproteobacteria</taxon>
        <taxon>Enterobacterales</taxon>
        <taxon>Enterobacteriaceae</taxon>
        <taxon>Salmonella</taxon>
    </lineage>
</organism>
<feature type="chain" id="PRO_1000133607" description="Biosynthetic peptidoglycan transglycosylase">
    <location>
        <begin position="1"/>
        <end position="242"/>
    </location>
</feature>
<feature type="transmembrane region" description="Helical" evidence="1">
    <location>
        <begin position="19"/>
        <end position="39"/>
    </location>
</feature>
<accession>B5RES4</accession>
<dbReference type="EC" id="2.4.99.28" evidence="1"/>
<dbReference type="EMBL" id="AM933173">
    <property type="protein sequence ID" value="CAR39014.1"/>
    <property type="molecule type" value="Genomic_DNA"/>
</dbReference>
<dbReference type="RefSeq" id="WP_000044648.1">
    <property type="nucleotide sequence ID" value="NC_011274.1"/>
</dbReference>
<dbReference type="SMR" id="B5RES4"/>
<dbReference type="CAZy" id="GT51">
    <property type="family name" value="Glycosyltransferase Family 51"/>
</dbReference>
<dbReference type="KEGG" id="seg:SG3216"/>
<dbReference type="HOGENOM" id="CLU_006354_1_1_6"/>
<dbReference type="UniPathway" id="UPA00219"/>
<dbReference type="Proteomes" id="UP000008321">
    <property type="component" value="Chromosome"/>
</dbReference>
<dbReference type="GO" id="GO:0009274">
    <property type="term" value="C:peptidoglycan-based cell wall"/>
    <property type="evidence" value="ECO:0007669"/>
    <property type="project" value="InterPro"/>
</dbReference>
<dbReference type="GO" id="GO:0005886">
    <property type="term" value="C:plasma membrane"/>
    <property type="evidence" value="ECO:0007669"/>
    <property type="project" value="UniProtKB-SubCell"/>
</dbReference>
<dbReference type="GO" id="GO:0016763">
    <property type="term" value="F:pentosyltransferase activity"/>
    <property type="evidence" value="ECO:0007669"/>
    <property type="project" value="InterPro"/>
</dbReference>
<dbReference type="GO" id="GO:0008955">
    <property type="term" value="F:peptidoglycan glycosyltransferase activity"/>
    <property type="evidence" value="ECO:0007669"/>
    <property type="project" value="UniProtKB-UniRule"/>
</dbReference>
<dbReference type="GO" id="GO:0071555">
    <property type="term" value="P:cell wall organization"/>
    <property type="evidence" value="ECO:0007669"/>
    <property type="project" value="UniProtKB-KW"/>
</dbReference>
<dbReference type="GO" id="GO:0009252">
    <property type="term" value="P:peptidoglycan biosynthetic process"/>
    <property type="evidence" value="ECO:0007669"/>
    <property type="project" value="UniProtKB-UniRule"/>
</dbReference>
<dbReference type="GO" id="GO:0008360">
    <property type="term" value="P:regulation of cell shape"/>
    <property type="evidence" value="ECO:0007669"/>
    <property type="project" value="UniProtKB-KW"/>
</dbReference>
<dbReference type="Gene3D" id="1.10.3810.10">
    <property type="entry name" value="Biosynthetic peptidoglycan transglycosylase-like"/>
    <property type="match status" value="1"/>
</dbReference>
<dbReference type="HAMAP" id="MF_00766">
    <property type="entry name" value="PGT_MtgA"/>
    <property type="match status" value="1"/>
</dbReference>
<dbReference type="InterPro" id="IPR001264">
    <property type="entry name" value="Glyco_trans_51"/>
</dbReference>
<dbReference type="InterPro" id="IPR023346">
    <property type="entry name" value="Lysozyme-like_dom_sf"/>
</dbReference>
<dbReference type="InterPro" id="IPR036950">
    <property type="entry name" value="PBP_transglycosylase"/>
</dbReference>
<dbReference type="InterPro" id="IPR011812">
    <property type="entry name" value="Pep_trsgly"/>
</dbReference>
<dbReference type="NCBIfam" id="TIGR02070">
    <property type="entry name" value="mono_pep_trsgly"/>
    <property type="match status" value="1"/>
</dbReference>
<dbReference type="PANTHER" id="PTHR30400:SF0">
    <property type="entry name" value="BIOSYNTHETIC PEPTIDOGLYCAN TRANSGLYCOSYLASE"/>
    <property type="match status" value="1"/>
</dbReference>
<dbReference type="PANTHER" id="PTHR30400">
    <property type="entry name" value="MONOFUNCTIONAL BIOSYNTHETIC PEPTIDOGLYCAN TRANSGLYCOSYLASE"/>
    <property type="match status" value="1"/>
</dbReference>
<dbReference type="Pfam" id="PF00912">
    <property type="entry name" value="Transgly"/>
    <property type="match status" value="1"/>
</dbReference>
<dbReference type="SUPFAM" id="SSF53955">
    <property type="entry name" value="Lysozyme-like"/>
    <property type="match status" value="1"/>
</dbReference>
<sequence length="242" mass="27002">MSKRRIAPLTFLRRLLLRILAALAVFWGGGIALFSVVPVPFSAVMAERQISAWLGGEFGYVAHSDWVSMADISPWMGLAVIAAEDQKFPEHWGFDVPAIEKALAHNERNESRIRGASTLSQQTAKNLFLWDGRSWLRKGLEAGLTLGIETVWSKKRILTVYLNIAEFGDGIFGVEAAAQRYFHKPASRLSVSEAALLAAVLPNPLRYKANAPSGYVRSRQAWIMRQMRQLGGESFMTRNQLN</sequence>
<gene>
    <name evidence="1" type="primary">mtgA</name>
    <name type="ordered locus">SG3216</name>
</gene>
<name>MTGA_SALG2</name>
<comment type="function">
    <text evidence="1">Peptidoglycan polymerase that catalyzes glycan chain elongation from lipid-linked precursors.</text>
</comment>
<comment type="catalytic activity">
    <reaction evidence="1">
        <text>[GlcNAc-(1-&gt;4)-Mur2Ac(oyl-L-Ala-gamma-D-Glu-L-Lys-D-Ala-D-Ala)](n)-di-trans,octa-cis-undecaprenyl diphosphate + beta-D-GlcNAc-(1-&gt;4)-Mur2Ac(oyl-L-Ala-gamma-D-Glu-L-Lys-D-Ala-D-Ala)-di-trans,octa-cis-undecaprenyl diphosphate = [GlcNAc-(1-&gt;4)-Mur2Ac(oyl-L-Ala-gamma-D-Glu-L-Lys-D-Ala-D-Ala)](n+1)-di-trans,octa-cis-undecaprenyl diphosphate + di-trans,octa-cis-undecaprenyl diphosphate + H(+)</text>
        <dbReference type="Rhea" id="RHEA:23708"/>
        <dbReference type="Rhea" id="RHEA-COMP:9602"/>
        <dbReference type="Rhea" id="RHEA-COMP:9603"/>
        <dbReference type="ChEBI" id="CHEBI:15378"/>
        <dbReference type="ChEBI" id="CHEBI:58405"/>
        <dbReference type="ChEBI" id="CHEBI:60033"/>
        <dbReference type="ChEBI" id="CHEBI:78435"/>
        <dbReference type="EC" id="2.4.99.28"/>
    </reaction>
</comment>
<comment type="pathway">
    <text evidence="1">Cell wall biogenesis; peptidoglycan biosynthesis.</text>
</comment>
<comment type="subcellular location">
    <subcellularLocation>
        <location evidence="1">Cell inner membrane</location>
        <topology evidence="1">Single-pass membrane protein</topology>
    </subcellularLocation>
</comment>
<comment type="similarity">
    <text evidence="1">Belongs to the glycosyltransferase 51 family.</text>
</comment>
<evidence type="ECO:0000255" key="1">
    <source>
        <dbReference type="HAMAP-Rule" id="MF_00766"/>
    </source>
</evidence>
<reference key="1">
    <citation type="journal article" date="2008" name="Genome Res.">
        <title>Comparative genome analysis of Salmonella enteritidis PT4 and Salmonella gallinarum 287/91 provides insights into evolutionary and host adaptation pathways.</title>
        <authorList>
            <person name="Thomson N.R."/>
            <person name="Clayton D.J."/>
            <person name="Windhorst D."/>
            <person name="Vernikos G."/>
            <person name="Davidson S."/>
            <person name="Churcher C."/>
            <person name="Quail M.A."/>
            <person name="Stevens M."/>
            <person name="Jones M.A."/>
            <person name="Watson M."/>
            <person name="Barron A."/>
            <person name="Layton A."/>
            <person name="Pickard D."/>
            <person name="Kingsley R.A."/>
            <person name="Bignell A."/>
            <person name="Clark L."/>
            <person name="Harris B."/>
            <person name="Ormond D."/>
            <person name="Abdellah Z."/>
            <person name="Brooks K."/>
            <person name="Cherevach I."/>
            <person name="Chillingworth T."/>
            <person name="Woodward J."/>
            <person name="Norberczak H."/>
            <person name="Lord A."/>
            <person name="Arrowsmith C."/>
            <person name="Jagels K."/>
            <person name="Moule S."/>
            <person name="Mungall K."/>
            <person name="Saunders M."/>
            <person name="Whitehead S."/>
            <person name="Chabalgoity J.A."/>
            <person name="Maskell D."/>
            <person name="Humphreys T."/>
            <person name="Roberts M."/>
            <person name="Barrow P.A."/>
            <person name="Dougan G."/>
            <person name="Parkhill J."/>
        </authorList>
    </citation>
    <scope>NUCLEOTIDE SEQUENCE [LARGE SCALE GENOMIC DNA]</scope>
    <source>
        <strain>287/91 / NCTC 13346</strain>
    </source>
</reference>
<proteinExistence type="inferred from homology"/>
<keyword id="KW-0997">Cell inner membrane</keyword>
<keyword id="KW-1003">Cell membrane</keyword>
<keyword id="KW-0133">Cell shape</keyword>
<keyword id="KW-0961">Cell wall biogenesis/degradation</keyword>
<keyword id="KW-0328">Glycosyltransferase</keyword>
<keyword id="KW-0472">Membrane</keyword>
<keyword id="KW-0573">Peptidoglycan synthesis</keyword>
<keyword id="KW-0808">Transferase</keyword>
<keyword id="KW-0812">Transmembrane</keyword>
<keyword id="KW-1133">Transmembrane helix</keyword>